<organism>
    <name type="scientific">Dictyoglomus turgidum (strain DSM 6724 / Z-1310)</name>
    <dbReference type="NCBI Taxonomy" id="515635"/>
    <lineage>
        <taxon>Bacteria</taxon>
        <taxon>Pseudomonadati</taxon>
        <taxon>Dictyoglomota</taxon>
        <taxon>Dictyoglomia</taxon>
        <taxon>Dictyoglomales</taxon>
        <taxon>Dictyoglomaceae</taxon>
        <taxon>Dictyoglomus</taxon>
    </lineage>
</organism>
<feature type="chain" id="PRO_1000139116" description="Uracil phosphoribosyltransferase">
    <location>
        <begin position="1"/>
        <end position="207"/>
    </location>
</feature>
<feature type="binding site" evidence="1">
    <location>
        <position position="77"/>
    </location>
    <ligand>
        <name>5-phospho-alpha-D-ribose 1-diphosphate</name>
        <dbReference type="ChEBI" id="CHEBI:58017"/>
    </ligand>
</feature>
<feature type="binding site" evidence="1">
    <location>
        <position position="102"/>
    </location>
    <ligand>
        <name>5-phospho-alpha-D-ribose 1-diphosphate</name>
        <dbReference type="ChEBI" id="CHEBI:58017"/>
    </ligand>
</feature>
<feature type="binding site" evidence="1">
    <location>
        <begin position="129"/>
        <end position="137"/>
    </location>
    <ligand>
        <name>5-phospho-alpha-D-ribose 1-diphosphate</name>
        <dbReference type="ChEBI" id="CHEBI:58017"/>
    </ligand>
</feature>
<feature type="binding site" evidence="1">
    <location>
        <position position="192"/>
    </location>
    <ligand>
        <name>uracil</name>
        <dbReference type="ChEBI" id="CHEBI:17568"/>
    </ligand>
</feature>
<feature type="binding site" evidence="1">
    <location>
        <begin position="197"/>
        <end position="199"/>
    </location>
    <ligand>
        <name>uracil</name>
        <dbReference type="ChEBI" id="CHEBI:17568"/>
    </ligand>
</feature>
<feature type="binding site" evidence="1">
    <location>
        <position position="198"/>
    </location>
    <ligand>
        <name>5-phospho-alpha-D-ribose 1-diphosphate</name>
        <dbReference type="ChEBI" id="CHEBI:58017"/>
    </ligand>
</feature>
<name>UPP_DICTD</name>
<protein>
    <recommendedName>
        <fullName evidence="1">Uracil phosphoribosyltransferase</fullName>
        <ecNumber evidence="1">2.4.2.9</ecNumber>
    </recommendedName>
    <alternativeName>
        <fullName evidence="1">UMP pyrophosphorylase</fullName>
    </alternativeName>
    <alternativeName>
        <fullName evidence="1">UPRTase</fullName>
    </alternativeName>
</protein>
<sequence length="207" mass="22686">MVIVVDHPLVQHKLTKLRDKSTEPKEFRELLSEISSLMLYEVTRNLPTKEVEVETPLGIAKGKVLNNKDLAIVPILRAGLVMAEGMLRILPSAKVGHIGLYRDPNTLKPVQYYTKLPEDIDKREVVVVDPMLATGGSAIAAISILKTKGVKNIKFVCIISAPEGIEALKNSHPDVDIYTAAIDEKLNDHGYIIPGLGDAGDRLFGTK</sequence>
<dbReference type="EC" id="2.4.2.9" evidence="1"/>
<dbReference type="EMBL" id="CP001251">
    <property type="protein sequence ID" value="ACK42092.1"/>
    <property type="molecule type" value="Genomic_DNA"/>
</dbReference>
<dbReference type="RefSeq" id="WP_012583176.1">
    <property type="nucleotide sequence ID" value="NC_011661.1"/>
</dbReference>
<dbReference type="RefSeq" id="YP_002352706.1">
    <property type="nucleotide sequence ID" value="NC_011661.1"/>
</dbReference>
<dbReference type="SMR" id="B8E009"/>
<dbReference type="FunCoup" id="B8E009">
    <property type="interactions" value="337"/>
</dbReference>
<dbReference type="STRING" id="515635.Dtur_0811"/>
<dbReference type="EnsemblBacteria" id="ACK42092">
    <property type="protein sequence ID" value="ACK42092"/>
    <property type="gene ID" value="Dtur_0811"/>
</dbReference>
<dbReference type="KEGG" id="dtu:Dtur_0811"/>
<dbReference type="PATRIC" id="fig|515635.4.peg.849"/>
<dbReference type="eggNOG" id="COG0035">
    <property type="taxonomic scope" value="Bacteria"/>
</dbReference>
<dbReference type="HOGENOM" id="CLU_067096_2_2_0"/>
<dbReference type="InParanoid" id="B8E009"/>
<dbReference type="OrthoDB" id="9781675at2"/>
<dbReference type="UniPathway" id="UPA00574">
    <property type="reaction ID" value="UER00636"/>
</dbReference>
<dbReference type="Proteomes" id="UP000007719">
    <property type="component" value="Chromosome"/>
</dbReference>
<dbReference type="GO" id="GO:0005737">
    <property type="term" value="C:cytoplasm"/>
    <property type="evidence" value="ECO:0000318"/>
    <property type="project" value="GO_Central"/>
</dbReference>
<dbReference type="GO" id="GO:0005525">
    <property type="term" value="F:GTP binding"/>
    <property type="evidence" value="ECO:0007669"/>
    <property type="project" value="UniProtKB-KW"/>
</dbReference>
<dbReference type="GO" id="GO:0000287">
    <property type="term" value="F:magnesium ion binding"/>
    <property type="evidence" value="ECO:0007669"/>
    <property type="project" value="UniProtKB-UniRule"/>
</dbReference>
<dbReference type="GO" id="GO:0004845">
    <property type="term" value="F:uracil phosphoribosyltransferase activity"/>
    <property type="evidence" value="ECO:0000318"/>
    <property type="project" value="GO_Central"/>
</dbReference>
<dbReference type="GO" id="GO:0044206">
    <property type="term" value="P:UMP salvage"/>
    <property type="evidence" value="ECO:0007669"/>
    <property type="project" value="UniProtKB-UniRule"/>
</dbReference>
<dbReference type="GO" id="GO:0006223">
    <property type="term" value="P:uracil salvage"/>
    <property type="evidence" value="ECO:0007669"/>
    <property type="project" value="InterPro"/>
</dbReference>
<dbReference type="CDD" id="cd06223">
    <property type="entry name" value="PRTases_typeI"/>
    <property type="match status" value="1"/>
</dbReference>
<dbReference type="FunFam" id="3.40.50.2020:FF:000003">
    <property type="entry name" value="Uracil phosphoribosyltransferase"/>
    <property type="match status" value="1"/>
</dbReference>
<dbReference type="Gene3D" id="3.40.50.2020">
    <property type="match status" value="1"/>
</dbReference>
<dbReference type="HAMAP" id="MF_01218_B">
    <property type="entry name" value="Upp_B"/>
    <property type="match status" value="1"/>
</dbReference>
<dbReference type="InterPro" id="IPR000836">
    <property type="entry name" value="PRibTrfase_dom"/>
</dbReference>
<dbReference type="InterPro" id="IPR029057">
    <property type="entry name" value="PRTase-like"/>
</dbReference>
<dbReference type="InterPro" id="IPR034332">
    <property type="entry name" value="Upp_B"/>
</dbReference>
<dbReference type="InterPro" id="IPR050054">
    <property type="entry name" value="UPRTase/APRTase"/>
</dbReference>
<dbReference type="InterPro" id="IPR005765">
    <property type="entry name" value="Ura_phspho_trans"/>
</dbReference>
<dbReference type="NCBIfam" id="NF001097">
    <property type="entry name" value="PRK00129.1"/>
    <property type="match status" value="1"/>
</dbReference>
<dbReference type="NCBIfam" id="TIGR01091">
    <property type="entry name" value="upp"/>
    <property type="match status" value="1"/>
</dbReference>
<dbReference type="PANTHER" id="PTHR32315">
    <property type="entry name" value="ADENINE PHOSPHORIBOSYLTRANSFERASE"/>
    <property type="match status" value="1"/>
</dbReference>
<dbReference type="PANTHER" id="PTHR32315:SF4">
    <property type="entry name" value="URACIL PHOSPHORIBOSYLTRANSFERASE, CHLOROPLASTIC"/>
    <property type="match status" value="1"/>
</dbReference>
<dbReference type="Pfam" id="PF14681">
    <property type="entry name" value="UPRTase"/>
    <property type="match status" value="1"/>
</dbReference>
<dbReference type="SUPFAM" id="SSF53271">
    <property type="entry name" value="PRTase-like"/>
    <property type="match status" value="1"/>
</dbReference>
<keyword id="KW-0021">Allosteric enzyme</keyword>
<keyword id="KW-0328">Glycosyltransferase</keyword>
<keyword id="KW-0342">GTP-binding</keyword>
<keyword id="KW-0460">Magnesium</keyword>
<keyword id="KW-0547">Nucleotide-binding</keyword>
<keyword id="KW-1185">Reference proteome</keyword>
<keyword id="KW-0808">Transferase</keyword>
<gene>
    <name evidence="1" type="primary">upp</name>
    <name type="ordered locus">Dtur_0811</name>
</gene>
<comment type="function">
    <text evidence="1">Catalyzes the conversion of uracil and 5-phospho-alpha-D-ribose 1-diphosphate (PRPP) to UMP and diphosphate.</text>
</comment>
<comment type="catalytic activity">
    <reaction evidence="1">
        <text>UMP + diphosphate = 5-phospho-alpha-D-ribose 1-diphosphate + uracil</text>
        <dbReference type="Rhea" id="RHEA:13017"/>
        <dbReference type="ChEBI" id="CHEBI:17568"/>
        <dbReference type="ChEBI" id="CHEBI:33019"/>
        <dbReference type="ChEBI" id="CHEBI:57865"/>
        <dbReference type="ChEBI" id="CHEBI:58017"/>
        <dbReference type="EC" id="2.4.2.9"/>
    </reaction>
</comment>
<comment type="cofactor">
    <cofactor evidence="1">
        <name>Mg(2+)</name>
        <dbReference type="ChEBI" id="CHEBI:18420"/>
    </cofactor>
    <text evidence="1">Binds 1 Mg(2+) ion per subunit. The magnesium is bound as Mg-PRPP.</text>
</comment>
<comment type="activity regulation">
    <text evidence="1">Allosterically activated by GTP.</text>
</comment>
<comment type="pathway">
    <text evidence="1">Pyrimidine metabolism; UMP biosynthesis via salvage pathway; UMP from uracil: step 1/1.</text>
</comment>
<comment type="similarity">
    <text evidence="1">Belongs to the UPRTase family.</text>
</comment>
<accession>B8E009</accession>
<evidence type="ECO:0000255" key="1">
    <source>
        <dbReference type="HAMAP-Rule" id="MF_01218"/>
    </source>
</evidence>
<proteinExistence type="inferred from homology"/>
<reference key="1">
    <citation type="journal article" date="2016" name="Front. Microbiol.">
        <title>The complete genome sequence of hyperthermophile Dictyoglomus turgidum DSM 6724 reveals a specialized carbohydrate fermentor.</title>
        <authorList>
            <person name="Brumm P.J."/>
            <person name="Gowda K."/>
            <person name="Robb F.T."/>
            <person name="Mead D.A."/>
        </authorList>
    </citation>
    <scope>NUCLEOTIDE SEQUENCE [LARGE SCALE GENOMIC DNA]</scope>
    <source>
        <strain>DSM 6724 / Z-1310</strain>
    </source>
</reference>